<feature type="chain" id="PRO_1000193882" description="Large ribosomal subunit protein bL19">
    <location>
        <begin position="1"/>
        <end position="115"/>
    </location>
</feature>
<organism>
    <name type="scientific">Salmonella paratyphi C (strain RKS4594)</name>
    <dbReference type="NCBI Taxonomy" id="476213"/>
    <lineage>
        <taxon>Bacteria</taxon>
        <taxon>Pseudomonadati</taxon>
        <taxon>Pseudomonadota</taxon>
        <taxon>Gammaproteobacteria</taxon>
        <taxon>Enterobacterales</taxon>
        <taxon>Enterobacteriaceae</taxon>
        <taxon>Salmonella</taxon>
    </lineage>
</organism>
<dbReference type="EMBL" id="CP000857">
    <property type="protein sequence ID" value="ACN46883.1"/>
    <property type="molecule type" value="Genomic_DNA"/>
</dbReference>
<dbReference type="RefSeq" id="WP_000065257.1">
    <property type="nucleotide sequence ID" value="NC_012125.1"/>
</dbReference>
<dbReference type="SMR" id="C0PW16"/>
<dbReference type="KEGG" id="sei:SPC_2784"/>
<dbReference type="HOGENOM" id="CLU_103507_2_1_6"/>
<dbReference type="Proteomes" id="UP000001599">
    <property type="component" value="Chromosome"/>
</dbReference>
<dbReference type="GO" id="GO:0022625">
    <property type="term" value="C:cytosolic large ribosomal subunit"/>
    <property type="evidence" value="ECO:0007669"/>
    <property type="project" value="TreeGrafter"/>
</dbReference>
<dbReference type="GO" id="GO:0003735">
    <property type="term" value="F:structural constituent of ribosome"/>
    <property type="evidence" value="ECO:0007669"/>
    <property type="project" value="InterPro"/>
</dbReference>
<dbReference type="GO" id="GO:0006412">
    <property type="term" value="P:translation"/>
    <property type="evidence" value="ECO:0007669"/>
    <property type="project" value="UniProtKB-UniRule"/>
</dbReference>
<dbReference type="FunFam" id="2.30.30.790:FF:000001">
    <property type="entry name" value="50S ribosomal protein L19"/>
    <property type="match status" value="1"/>
</dbReference>
<dbReference type="Gene3D" id="2.30.30.790">
    <property type="match status" value="1"/>
</dbReference>
<dbReference type="HAMAP" id="MF_00402">
    <property type="entry name" value="Ribosomal_bL19"/>
    <property type="match status" value="1"/>
</dbReference>
<dbReference type="InterPro" id="IPR001857">
    <property type="entry name" value="Ribosomal_bL19"/>
</dbReference>
<dbReference type="InterPro" id="IPR018257">
    <property type="entry name" value="Ribosomal_bL19_CS"/>
</dbReference>
<dbReference type="InterPro" id="IPR038657">
    <property type="entry name" value="Ribosomal_bL19_sf"/>
</dbReference>
<dbReference type="InterPro" id="IPR008991">
    <property type="entry name" value="Translation_prot_SH3-like_sf"/>
</dbReference>
<dbReference type="NCBIfam" id="TIGR01024">
    <property type="entry name" value="rplS_bact"/>
    <property type="match status" value="1"/>
</dbReference>
<dbReference type="PANTHER" id="PTHR15680:SF9">
    <property type="entry name" value="LARGE RIBOSOMAL SUBUNIT PROTEIN BL19M"/>
    <property type="match status" value="1"/>
</dbReference>
<dbReference type="PANTHER" id="PTHR15680">
    <property type="entry name" value="RIBOSOMAL PROTEIN L19"/>
    <property type="match status" value="1"/>
</dbReference>
<dbReference type="Pfam" id="PF01245">
    <property type="entry name" value="Ribosomal_L19"/>
    <property type="match status" value="1"/>
</dbReference>
<dbReference type="PIRSF" id="PIRSF002191">
    <property type="entry name" value="Ribosomal_L19"/>
    <property type="match status" value="1"/>
</dbReference>
<dbReference type="PRINTS" id="PR00061">
    <property type="entry name" value="RIBOSOMALL19"/>
</dbReference>
<dbReference type="SUPFAM" id="SSF50104">
    <property type="entry name" value="Translation proteins SH3-like domain"/>
    <property type="match status" value="1"/>
</dbReference>
<dbReference type="PROSITE" id="PS01015">
    <property type="entry name" value="RIBOSOMAL_L19"/>
    <property type="match status" value="1"/>
</dbReference>
<reference key="1">
    <citation type="journal article" date="2009" name="PLoS ONE">
        <title>Salmonella paratyphi C: genetic divergence from Salmonella choleraesuis and pathogenic convergence with Salmonella typhi.</title>
        <authorList>
            <person name="Liu W.-Q."/>
            <person name="Feng Y."/>
            <person name="Wang Y."/>
            <person name="Zou Q.-H."/>
            <person name="Chen F."/>
            <person name="Guo J.-T."/>
            <person name="Peng Y.-H."/>
            <person name="Jin Y."/>
            <person name="Li Y.-G."/>
            <person name="Hu S.-N."/>
            <person name="Johnston R.N."/>
            <person name="Liu G.-R."/>
            <person name="Liu S.-L."/>
        </authorList>
    </citation>
    <scope>NUCLEOTIDE SEQUENCE [LARGE SCALE GENOMIC DNA]</scope>
    <source>
        <strain>RKS4594</strain>
    </source>
</reference>
<comment type="function">
    <text evidence="1">This protein is located at the 30S-50S ribosomal subunit interface and may play a role in the structure and function of the aminoacyl-tRNA binding site.</text>
</comment>
<comment type="similarity">
    <text evidence="1">Belongs to the bacterial ribosomal protein bL19 family.</text>
</comment>
<evidence type="ECO:0000255" key="1">
    <source>
        <dbReference type="HAMAP-Rule" id="MF_00402"/>
    </source>
</evidence>
<evidence type="ECO:0000305" key="2"/>
<gene>
    <name evidence="1" type="primary">rplS</name>
    <name type="ordered locus">SPC_2784</name>
</gene>
<name>RL19_SALPC</name>
<sequence>MSNIIKQLEQEQMKQNVPSFRPGDTVEVKVWVVEGTKKRLQAFEGVVIAIRNRGLHSAFTVRKISNGEGVERVFQTHSPVVDSIAVKRRGAVRKAKLYYLRERTGKAARIKERLN</sequence>
<keyword id="KW-0687">Ribonucleoprotein</keyword>
<keyword id="KW-0689">Ribosomal protein</keyword>
<protein>
    <recommendedName>
        <fullName evidence="1">Large ribosomal subunit protein bL19</fullName>
    </recommendedName>
    <alternativeName>
        <fullName evidence="2">50S ribosomal protein L19</fullName>
    </alternativeName>
</protein>
<accession>C0PW16</accession>
<proteinExistence type="inferred from homology"/>